<gene>
    <name evidence="1" type="primary">phnX</name>
    <name type="ordered locus">BA_1340</name>
    <name type="ordered locus">GBAA_1340</name>
    <name type="ordered locus">BAS1239</name>
</gene>
<organism>
    <name type="scientific">Bacillus anthracis</name>
    <dbReference type="NCBI Taxonomy" id="1392"/>
    <lineage>
        <taxon>Bacteria</taxon>
        <taxon>Bacillati</taxon>
        <taxon>Bacillota</taxon>
        <taxon>Bacilli</taxon>
        <taxon>Bacillales</taxon>
        <taxon>Bacillaceae</taxon>
        <taxon>Bacillus</taxon>
        <taxon>Bacillus cereus group</taxon>
    </lineage>
</organism>
<evidence type="ECO:0000255" key="1">
    <source>
        <dbReference type="HAMAP-Rule" id="MF_01375"/>
    </source>
</evidence>
<name>PHNX_BACAN</name>
<feature type="chain" id="PRO_0000284574" description="Phosphonoacetaldehyde hydrolase">
    <location>
        <begin position="1"/>
        <end position="264"/>
    </location>
</feature>
<feature type="active site" description="Nucleophile" evidence="1">
    <location>
        <position position="9"/>
    </location>
</feature>
<feature type="active site" description="Schiff-base intermediate with substrate" evidence="1">
    <location>
        <position position="50"/>
    </location>
</feature>
<feature type="binding site" evidence="1">
    <location>
        <position position="9"/>
    </location>
    <ligand>
        <name>Mg(2+)</name>
        <dbReference type="ChEBI" id="CHEBI:18420"/>
    </ligand>
</feature>
<feature type="binding site" evidence="1">
    <location>
        <position position="11"/>
    </location>
    <ligand>
        <name>Mg(2+)</name>
        <dbReference type="ChEBI" id="CHEBI:18420"/>
    </ligand>
</feature>
<feature type="binding site" evidence="1">
    <location>
        <position position="183"/>
    </location>
    <ligand>
        <name>Mg(2+)</name>
        <dbReference type="ChEBI" id="CHEBI:18420"/>
    </ligand>
</feature>
<dbReference type="EC" id="3.11.1.1" evidence="1"/>
<dbReference type="EMBL" id="AE016879">
    <property type="protein sequence ID" value="AAP25289.1"/>
    <property type="molecule type" value="Genomic_DNA"/>
</dbReference>
<dbReference type="EMBL" id="AE017225">
    <property type="protein sequence ID" value="AAT53559.1"/>
    <property type="molecule type" value="Genomic_DNA"/>
</dbReference>
<dbReference type="EMBL" id="AE017334">
    <property type="protein sequence ID" value="AAT30433.1"/>
    <property type="molecule type" value="Genomic_DNA"/>
</dbReference>
<dbReference type="RefSeq" id="NP_843803.1">
    <property type="nucleotide sequence ID" value="NC_003997.3"/>
</dbReference>
<dbReference type="RefSeq" id="WP_000687375.1">
    <property type="nucleotide sequence ID" value="NZ_WXXJ01000001.1"/>
</dbReference>
<dbReference type="RefSeq" id="YP_027508.1">
    <property type="nucleotide sequence ID" value="NC_005945.1"/>
</dbReference>
<dbReference type="SMR" id="Q81TE1"/>
<dbReference type="STRING" id="261594.GBAA_1340"/>
<dbReference type="DNASU" id="1087293"/>
<dbReference type="GeneID" id="45021329"/>
<dbReference type="KEGG" id="ban:BA_1340"/>
<dbReference type="KEGG" id="banh:HYU01_06820"/>
<dbReference type="KEGG" id="bar:GBAA_1340"/>
<dbReference type="KEGG" id="bat:BAS1239"/>
<dbReference type="PATRIC" id="fig|198094.11.peg.1313"/>
<dbReference type="eggNOG" id="COG0637">
    <property type="taxonomic scope" value="Bacteria"/>
</dbReference>
<dbReference type="HOGENOM" id="CLU_045011_12_0_9"/>
<dbReference type="OrthoDB" id="5504491at2"/>
<dbReference type="Proteomes" id="UP000000427">
    <property type="component" value="Chromosome"/>
</dbReference>
<dbReference type="Proteomes" id="UP000000594">
    <property type="component" value="Chromosome"/>
</dbReference>
<dbReference type="GO" id="GO:0005829">
    <property type="term" value="C:cytosol"/>
    <property type="evidence" value="ECO:0007669"/>
    <property type="project" value="TreeGrafter"/>
</dbReference>
<dbReference type="GO" id="GO:0000287">
    <property type="term" value="F:magnesium ion binding"/>
    <property type="evidence" value="ECO:0007669"/>
    <property type="project" value="UniProtKB-UniRule"/>
</dbReference>
<dbReference type="GO" id="GO:0008967">
    <property type="term" value="F:phosphoglycolate phosphatase activity"/>
    <property type="evidence" value="ECO:0007669"/>
    <property type="project" value="TreeGrafter"/>
</dbReference>
<dbReference type="GO" id="GO:0050194">
    <property type="term" value="F:phosphonoacetaldehyde hydrolase activity"/>
    <property type="evidence" value="ECO:0007669"/>
    <property type="project" value="UniProtKB-UniRule"/>
</dbReference>
<dbReference type="GO" id="GO:0006281">
    <property type="term" value="P:DNA repair"/>
    <property type="evidence" value="ECO:0007669"/>
    <property type="project" value="TreeGrafter"/>
</dbReference>
<dbReference type="GO" id="GO:0019700">
    <property type="term" value="P:organic phosphonate catabolic process"/>
    <property type="evidence" value="ECO:0007669"/>
    <property type="project" value="InterPro"/>
</dbReference>
<dbReference type="CDD" id="cd02586">
    <property type="entry name" value="HAD_PHN"/>
    <property type="match status" value="1"/>
</dbReference>
<dbReference type="FunFam" id="1.10.150.240:FF:000006">
    <property type="entry name" value="Phosphonoacetaldehyde hydrolase"/>
    <property type="match status" value="1"/>
</dbReference>
<dbReference type="FunFam" id="3.40.50.1000:FF:000072">
    <property type="entry name" value="Phosphonoacetaldehyde hydrolase"/>
    <property type="match status" value="1"/>
</dbReference>
<dbReference type="Gene3D" id="3.40.50.1000">
    <property type="entry name" value="HAD superfamily/HAD-like"/>
    <property type="match status" value="1"/>
</dbReference>
<dbReference type="Gene3D" id="1.10.150.240">
    <property type="entry name" value="Putative phosphatase, domain 2"/>
    <property type="match status" value="1"/>
</dbReference>
<dbReference type="HAMAP" id="MF_01375">
    <property type="entry name" value="PhnX"/>
    <property type="match status" value="1"/>
</dbReference>
<dbReference type="InterPro" id="IPR050155">
    <property type="entry name" value="HAD-like_hydrolase_sf"/>
</dbReference>
<dbReference type="InterPro" id="IPR036412">
    <property type="entry name" value="HAD-like_sf"/>
</dbReference>
<dbReference type="InterPro" id="IPR006439">
    <property type="entry name" value="HAD-SF_hydro_IA"/>
</dbReference>
<dbReference type="InterPro" id="IPR023214">
    <property type="entry name" value="HAD_sf"/>
</dbReference>
<dbReference type="InterPro" id="IPR023198">
    <property type="entry name" value="PGP-like_dom2"/>
</dbReference>
<dbReference type="InterPro" id="IPR006323">
    <property type="entry name" value="Phosphonoacetald_hydro"/>
</dbReference>
<dbReference type="NCBIfam" id="TIGR01549">
    <property type="entry name" value="HAD-SF-IA-v1"/>
    <property type="match status" value="1"/>
</dbReference>
<dbReference type="NCBIfam" id="TIGR01509">
    <property type="entry name" value="HAD-SF-IA-v3"/>
    <property type="match status" value="1"/>
</dbReference>
<dbReference type="NCBIfam" id="TIGR01422">
    <property type="entry name" value="phosphonatase"/>
    <property type="match status" value="1"/>
</dbReference>
<dbReference type="PANTHER" id="PTHR43434">
    <property type="entry name" value="PHOSPHOGLYCOLATE PHOSPHATASE"/>
    <property type="match status" value="1"/>
</dbReference>
<dbReference type="PANTHER" id="PTHR43434:SF19">
    <property type="entry name" value="PHOSPHONOACETALDEHYDE HYDROLASE"/>
    <property type="match status" value="1"/>
</dbReference>
<dbReference type="Pfam" id="PF00702">
    <property type="entry name" value="Hydrolase"/>
    <property type="match status" value="1"/>
</dbReference>
<dbReference type="SFLD" id="SFLDS00003">
    <property type="entry name" value="Haloacid_Dehalogenase"/>
    <property type="match status" value="1"/>
</dbReference>
<dbReference type="SFLD" id="SFLDF00038">
    <property type="entry name" value="phosphonoacetaldehyde_hydrolas"/>
    <property type="match status" value="1"/>
</dbReference>
<dbReference type="SUPFAM" id="SSF56784">
    <property type="entry name" value="HAD-like"/>
    <property type="match status" value="1"/>
</dbReference>
<sequence length="264" mass="30042">MKIEAVIFDWAGTTVDYGCFAPLEVFMEIFHKRGVGITAEEARKPMGLLKIDHVRALTEMPRIANEWNRIFGQLPTETDIQEMYEEFEEILFAILPRYASPIHGVKEVIASLRERGIKIGSTTGYTREMMDIVAKEAALQGYKPDFLVTPDDVPAGRPYPWMCYKNAMELGVYPMNHMIKIGDTVSDMKEGRNAGMWTVGVILGSSELGLSEEEVENMDPAELREKIEVVRNRFVENGAHFTIETMQELESVMERIEKQELIIS</sequence>
<accession>Q81TE1</accession>
<accession>Q6I1M2</accession>
<accession>Q6KVG6</accession>
<comment type="function">
    <text evidence="1">Involved in phosphonate degradation.</text>
</comment>
<comment type="catalytic activity">
    <reaction evidence="1">
        <text>phosphonoacetaldehyde + H2O = acetaldehyde + phosphate + H(+)</text>
        <dbReference type="Rhea" id="RHEA:18905"/>
        <dbReference type="ChEBI" id="CHEBI:15343"/>
        <dbReference type="ChEBI" id="CHEBI:15377"/>
        <dbReference type="ChEBI" id="CHEBI:15378"/>
        <dbReference type="ChEBI" id="CHEBI:43474"/>
        <dbReference type="ChEBI" id="CHEBI:58383"/>
        <dbReference type="EC" id="3.11.1.1"/>
    </reaction>
</comment>
<comment type="cofactor">
    <cofactor evidence="1">
        <name>Mg(2+)</name>
        <dbReference type="ChEBI" id="CHEBI:18420"/>
    </cofactor>
    <text evidence="1">Binds 1 Mg(2+) ion per subunit.</text>
</comment>
<comment type="subunit">
    <text evidence="1">Homodimer.</text>
</comment>
<comment type="similarity">
    <text evidence="1">Belongs to the HAD-like hydrolase superfamily. PhnX family.</text>
</comment>
<protein>
    <recommendedName>
        <fullName evidence="1">Phosphonoacetaldehyde hydrolase</fullName>
        <shortName evidence="1">Phosphonatase</shortName>
        <ecNumber evidence="1">3.11.1.1</ecNumber>
    </recommendedName>
    <alternativeName>
        <fullName evidence="1">Phosphonoacetaldehyde phosphonohydrolase</fullName>
    </alternativeName>
</protein>
<reference key="1">
    <citation type="journal article" date="2003" name="Nature">
        <title>The genome sequence of Bacillus anthracis Ames and comparison to closely related bacteria.</title>
        <authorList>
            <person name="Read T.D."/>
            <person name="Peterson S.N."/>
            <person name="Tourasse N.J."/>
            <person name="Baillie L.W."/>
            <person name="Paulsen I.T."/>
            <person name="Nelson K.E."/>
            <person name="Tettelin H."/>
            <person name="Fouts D.E."/>
            <person name="Eisen J.A."/>
            <person name="Gill S.R."/>
            <person name="Holtzapple E.K."/>
            <person name="Okstad O.A."/>
            <person name="Helgason E."/>
            <person name="Rilstone J."/>
            <person name="Wu M."/>
            <person name="Kolonay J.F."/>
            <person name="Beanan M.J."/>
            <person name="Dodson R.J."/>
            <person name="Brinkac L.M."/>
            <person name="Gwinn M.L."/>
            <person name="DeBoy R.T."/>
            <person name="Madpu R."/>
            <person name="Daugherty S.C."/>
            <person name="Durkin A.S."/>
            <person name="Haft D.H."/>
            <person name="Nelson W.C."/>
            <person name="Peterson J.D."/>
            <person name="Pop M."/>
            <person name="Khouri H.M."/>
            <person name="Radune D."/>
            <person name="Benton J.L."/>
            <person name="Mahamoud Y."/>
            <person name="Jiang L."/>
            <person name="Hance I.R."/>
            <person name="Weidman J.F."/>
            <person name="Berry K.J."/>
            <person name="Plaut R.D."/>
            <person name="Wolf A.M."/>
            <person name="Watkins K.L."/>
            <person name="Nierman W.C."/>
            <person name="Hazen A."/>
            <person name="Cline R.T."/>
            <person name="Redmond C."/>
            <person name="Thwaite J.E."/>
            <person name="White O."/>
            <person name="Salzberg S.L."/>
            <person name="Thomason B."/>
            <person name="Friedlander A.M."/>
            <person name="Koehler T.M."/>
            <person name="Hanna P.C."/>
            <person name="Kolstoe A.-B."/>
            <person name="Fraser C.M."/>
        </authorList>
    </citation>
    <scope>NUCLEOTIDE SEQUENCE [LARGE SCALE GENOMIC DNA]</scope>
    <source>
        <strain>Ames / isolate Porton</strain>
    </source>
</reference>
<reference key="2">
    <citation type="submission" date="2004-01" db="EMBL/GenBank/DDBJ databases">
        <title>Complete genome sequence of Bacillus anthracis Sterne.</title>
        <authorList>
            <person name="Brettin T.S."/>
            <person name="Bruce D."/>
            <person name="Challacombe J.F."/>
            <person name="Gilna P."/>
            <person name="Han C."/>
            <person name="Hill K."/>
            <person name="Hitchcock P."/>
            <person name="Jackson P."/>
            <person name="Keim P."/>
            <person name="Longmire J."/>
            <person name="Lucas S."/>
            <person name="Okinaka R."/>
            <person name="Richardson P."/>
            <person name="Rubin E."/>
            <person name="Tice H."/>
        </authorList>
    </citation>
    <scope>NUCLEOTIDE SEQUENCE [LARGE SCALE GENOMIC DNA]</scope>
    <source>
        <strain>Sterne</strain>
    </source>
</reference>
<reference key="3">
    <citation type="journal article" date="2009" name="J. Bacteriol.">
        <title>The complete genome sequence of Bacillus anthracis Ames 'Ancestor'.</title>
        <authorList>
            <person name="Ravel J."/>
            <person name="Jiang L."/>
            <person name="Stanley S.T."/>
            <person name="Wilson M.R."/>
            <person name="Decker R.S."/>
            <person name="Read T.D."/>
            <person name="Worsham P."/>
            <person name="Keim P.S."/>
            <person name="Salzberg S.L."/>
            <person name="Fraser-Liggett C.M."/>
            <person name="Rasko D.A."/>
        </authorList>
    </citation>
    <scope>NUCLEOTIDE SEQUENCE [LARGE SCALE GENOMIC DNA]</scope>
    <source>
        <strain>Ames ancestor</strain>
    </source>
</reference>
<proteinExistence type="inferred from homology"/>
<keyword id="KW-0378">Hydrolase</keyword>
<keyword id="KW-0460">Magnesium</keyword>
<keyword id="KW-0479">Metal-binding</keyword>
<keyword id="KW-1185">Reference proteome</keyword>
<keyword id="KW-0704">Schiff base</keyword>